<feature type="chain" id="PRO_0000070805" description="Chaperone protein DnaJ">
    <location>
        <begin position="1"/>
        <end position="383"/>
    </location>
</feature>
<feature type="domain" description="J" evidence="1">
    <location>
        <begin position="6"/>
        <end position="70"/>
    </location>
</feature>
<feature type="repeat" description="CXXCXGXG motif">
    <location>
        <begin position="153"/>
        <end position="160"/>
    </location>
</feature>
<feature type="repeat" description="CXXCXGXG motif">
    <location>
        <begin position="170"/>
        <end position="177"/>
    </location>
</feature>
<feature type="repeat" description="CXXCXGXG motif">
    <location>
        <begin position="196"/>
        <end position="203"/>
    </location>
</feature>
<feature type="repeat" description="CXXCXGXG motif">
    <location>
        <begin position="210"/>
        <end position="217"/>
    </location>
</feature>
<feature type="zinc finger region" description="CR-type" evidence="1">
    <location>
        <begin position="140"/>
        <end position="222"/>
    </location>
</feature>
<feature type="binding site" evidence="1">
    <location>
        <position position="153"/>
    </location>
    <ligand>
        <name>Zn(2+)</name>
        <dbReference type="ChEBI" id="CHEBI:29105"/>
        <label>1</label>
    </ligand>
</feature>
<feature type="binding site" evidence="1">
    <location>
        <position position="156"/>
    </location>
    <ligand>
        <name>Zn(2+)</name>
        <dbReference type="ChEBI" id="CHEBI:29105"/>
        <label>1</label>
    </ligand>
</feature>
<feature type="binding site" evidence="1">
    <location>
        <position position="170"/>
    </location>
    <ligand>
        <name>Zn(2+)</name>
        <dbReference type="ChEBI" id="CHEBI:29105"/>
        <label>2</label>
    </ligand>
</feature>
<feature type="binding site" evidence="1">
    <location>
        <position position="173"/>
    </location>
    <ligand>
        <name>Zn(2+)</name>
        <dbReference type="ChEBI" id="CHEBI:29105"/>
        <label>2</label>
    </ligand>
</feature>
<feature type="binding site" evidence="1">
    <location>
        <position position="196"/>
    </location>
    <ligand>
        <name>Zn(2+)</name>
        <dbReference type="ChEBI" id="CHEBI:29105"/>
        <label>2</label>
    </ligand>
</feature>
<feature type="binding site" evidence="1">
    <location>
        <position position="199"/>
    </location>
    <ligand>
        <name>Zn(2+)</name>
        <dbReference type="ChEBI" id="CHEBI:29105"/>
        <label>2</label>
    </ligand>
</feature>
<feature type="binding site" evidence="1">
    <location>
        <position position="210"/>
    </location>
    <ligand>
        <name>Zn(2+)</name>
        <dbReference type="ChEBI" id="CHEBI:29105"/>
        <label>1</label>
    </ligand>
</feature>
<feature type="binding site" evidence="1">
    <location>
        <position position="213"/>
    </location>
    <ligand>
        <name>Zn(2+)</name>
        <dbReference type="ChEBI" id="CHEBI:29105"/>
        <label>1</label>
    </ligand>
</feature>
<dbReference type="EMBL" id="AJ006274">
    <property type="protein sequence ID" value="CAA06942.1"/>
    <property type="molecule type" value="Genomic_DNA"/>
</dbReference>
<dbReference type="RefSeq" id="WP_016265324.1">
    <property type="nucleotide sequence ID" value="NZ_VSTE01000001.1"/>
</dbReference>
<dbReference type="SMR" id="O87778"/>
<dbReference type="GO" id="GO:0005737">
    <property type="term" value="C:cytoplasm"/>
    <property type="evidence" value="ECO:0007669"/>
    <property type="project" value="UniProtKB-SubCell"/>
</dbReference>
<dbReference type="GO" id="GO:0005524">
    <property type="term" value="F:ATP binding"/>
    <property type="evidence" value="ECO:0007669"/>
    <property type="project" value="InterPro"/>
</dbReference>
<dbReference type="GO" id="GO:0031072">
    <property type="term" value="F:heat shock protein binding"/>
    <property type="evidence" value="ECO:0007669"/>
    <property type="project" value="InterPro"/>
</dbReference>
<dbReference type="GO" id="GO:0051082">
    <property type="term" value="F:unfolded protein binding"/>
    <property type="evidence" value="ECO:0007669"/>
    <property type="project" value="UniProtKB-UniRule"/>
</dbReference>
<dbReference type="GO" id="GO:0008270">
    <property type="term" value="F:zinc ion binding"/>
    <property type="evidence" value="ECO:0007669"/>
    <property type="project" value="UniProtKB-UniRule"/>
</dbReference>
<dbReference type="GO" id="GO:0051085">
    <property type="term" value="P:chaperone cofactor-dependent protein refolding"/>
    <property type="evidence" value="ECO:0007669"/>
    <property type="project" value="TreeGrafter"/>
</dbReference>
<dbReference type="GO" id="GO:0006260">
    <property type="term" value="P:DNA replication"/>
    <property type="evidence" value="ECO:0007669"/>
    <property type="project" value="UniProtKB-KW"/>
</dbReference>
<dbReference type="GO" id="GO:0042026">
    <property type="term" value="P:protein refolding"/>
    <property type="evidence" value="ECO:0007669"/>
    <property type="project" value="TreeGrafter"/>
</dbReference>
<dbReference type="GO" id="GO:0009408">
    <property type="term" value="P:response to heat"/>
    <property type="evidence" value="ECO:0007669"/>
    <property type="project" value="InterPro"/>
</dbReference>
<dbReference type="CDD" id="cd06257">
    <property type="entry name" value="DnaJ"/>
    <property type="match status" value="1"/>
</dbReference>
<dbReference type="CDD" id="cd10747">
    <property type="entry name" value="DnaJ_C"/>
    <property type="match status" value="1"/>
</dbReference>
<dbReference type="CDD" id="cd10719">
    <property type="entry name" value="DnaJ_zf"/>
    <property type="match status" value="1"/>
</dbReference>
<dbReference type="FunFam" id="1.10.287.110:FF:000031">
    <property type="entry name" value="Molecular chaperone DnaJ"/>
    <property type="match status" value="1"/>
</dbReference>
<dbReference type="FunFam" id="2.10.230.10:FF:000002">
    <property type="entry name" value="Molecular chaperone DnaJ"/>
    <property type="match status" value="1"/>
</dbReference>
<dbReference type="FunFam" id="2.60.260.20:FF:000004">
    <property type="entry name" value="Molecular chaperone DnaJ"/>
    <property type="match status" value="1"/>
</dbReference>
<dbReference type="Gene3D" id="1.10.287.110">
    <property type="entry name" value="DnaJ domain"/>
    <property type="match status" value="1"/>
</dbReference>
<dbReference type="Gene3D" id="2.10.230.10">
    <property type="entry name" value="Heat shock protein DnaJ, cysteine-rich domain"/>
    <property type="match status" value="1"/>
</dbReference>
<dbReference type="Gene3D" id="2.60.260.20">
    <property type="entry name" value="Urease metallochaperone UreE, N-terminal domain"/>
    <property type="match status" value="2"/>
</dbReference>
<dbReference type="HAMAP" id="MF_01152">
    <property type="entry name" value="DnaJ"/>
    <property type="match status" value="1"/>
</dbReference>
<dbReference type="InterPro" id="IPR012724">
    <property type="entry name" value="DnaJ"/>
</dbReference>
<dbReference type="InterPro" id="IPR002939">
    <property type="entry name" value="DnaJ_C"/>
</dbReference>
<dbReference type="InterPro" id="IPR001623">
    <property type="entry name" value="DnaJ_domain"/>
</dbReference>
<dbReference type="InterPro" id="IPR018253">
    <property type="entry name" value="DnaJ_domain_CS"/>
</dbReference>
<dbReference type="InterPro" id="IPR008971">
    <property type="entry name" value="HSP40/DnaJ_pept-bd"/>
</dbReference>
<dbReference type="InterPro" id="IPR001305">
    <property type="entry name" value="HSP_DnaJ_Cys-rich_dom"/>
</dbReference>
<dbReference type="InterPro" id="IPR036410">
    <property type="entry name" value="HSP_DnaJ_Cys-rich_dom_sf"/>
</dbReference>
<dbReference type="InterPro" id="IPR036869">
    <property type="entry name" value="J_dom_sf"/>
</dbReference>
<dbReference type="NCBIfam" id="TIGR02349">
    <property type="entry name" value="DnaJ_bact"/>
    <property type="match status" value="1"/>
</dbReference>
<dbReference type="NCBIfam" id="NF008035">
    <property type="entry name" value="PRK10767.1"/>
    <property type="match status" value="1"/>
</dbReference>
<dbReference type="NCBIfam" id="NF010869">
    <property type="entry name" value="PRK14276.1"/>
    <property type="match status" value="1"/>
</dbReference>
<dbReference type="NCBIfam" id="NF010873">
    <property type="entry name" value="PRK14280.1"/>
    <property type="match status" value="1"/>
</dbReference>
<dbReference type="PANTHER" id="PTHR43096:SF48">
    <property type="entry name" value="CHAPERONE PROTEIN DNAJ"/>
    <property type="match status" value="1"/>
</dbReference>
<dbReference type="PANTHER" id="PTHR43096">
    <property type="entry name" value="DNAJ HOMOLOG 1, MITOCHONDRIAL-RELATED"/>
    <property type="match status" value="1"/>
</dbReference>
<dbReference type="Pfam" id="PF00226">
    <property type="entry name" value="DnaJ"/>
    <property type="match status" value="1"/>
</dbReference>
<dbReference type="Pfam" id="PF01556">
    <property type="entry name" value="DnaJ_C"/>
    <property type="match status" value="1"/>
</dbReference>
<dbReference type="Pfam" id="PF00684">
    <property type="entry name" value="DnaJ_CXXCXGXG"/>
    <property type="match status" value="1"/>
</dbReference>
<dbReference type="PRINTS" id="PR00625">
    <property type="entry name" value="JDOMAIN"/>
</dbReference>
<dbReference type="SMART" id="SM00271">
    <property type="entry name" value="DnaJ"/>
    <property type="match status" value="1"/>
</dbReference>
<dbReference type="SUPFAM" id="SSF46565">
    <property type="entry name" value="Chaperone J-domain"/>
    <property type="match status" value="1"/>
</dbReference>
<dbReference type="SUPFAM" id="SSF57938">
    <property type="entry name" value="DnaJ/Hsp40 cysteine-rich domain"/>
    <property type="match status" value="1"/>
</dbReference>
<dbReference type="SUPFAM" id="SSF49493">
    <property type="entry name" value="HSP40/DnaJ peptide-binding domain"/>
    <property type="match status" value="2"/>
</dbReference>
<dbReference type="PROSITE" id="PS00636">
    <property type="entry name" value="DNAJ_1"/>
    <property type="match status" value="1"/>
</dbReference>
<dbReference type="PROSITE" id="PS50076">
    <property type="entry name" value="DNAJ_2"/>
    <property type="match status" value="1"/>
</dbReference>
<dbReference type="PROSITE" id="PS51188">
    <property type="entry name" value="ZF_CR"/>
    <property type="match status" value="1"/>
</dbReference>
<keyword id="KW-0143">Chaperone</keyword>
<keyword id="KW-0963">Cytoplasm</keyword>
<keyword id="KW-0235">DNA replication</keyword>
<keyword id="KW-0479">Metal-binding</keyword>
<keyword id="KW-0677">Repeat</keyword>
<keyword id="KW-0346">Stress response</keyword>
<keyword id="KW-0862">Zinc</keyword>
<keyword id="KW-0863">Zinc-finger</keyword>
<sequence length="383" mass="41132">MAEKRDYYDVLGVGRDASDDEIKKAYRKLSKKYHPDINKAPDAEAKFKEVTEAYEALSDPQKRAAYDQYGHAGMNGGFGGGAGAGQGFGGFGGGAEGFGGFDDIFSSFFGGGARQQPNGPRQGSDLQYRMDLKFEEAVFGKETKISYSREAECHTCHGSGAKPGTSAETCHKCHGAGQIQVERQTPLGRMMSRETCDVCGGTGKEIKSKCDTCHGTGREEERHTVKVKVPAGVEDGQQMRLQGQGEAGSNGGPYGDLFIVFRVAPSDEFERDGAQIFVEVPISFVQAALGDEIEVNTVHGPVKLKIPAGTQTNTVFRLRGKGAPKLHGTGNGDQKVTVNVVTPKSLNSKQRDALKAFAVASGDSVNPQDNNLFDKILNKKHKK</sequence>
<name>DNAJ_LATSK</name>
<comment type="function">
    <text evidence="1">Participates actively in the response to hyperosmotic and heat shock by preventing the aggregation of stress-denatured proteins and by disaggregating proteins, also in an autonomous, DnaK-independent fashion. Unfolded proteins bind initially to DnaJ; upon interaction with the DnaJ-bound protein, DnaK hydrolyzes its bound ATP, resulting in the formation of a stable complex. GrpE releases ADP from DnaK; ATP binding to DnaK triggers the release of the substrate protein, thus completing the reaction cycle. Several rounds of ATP-dependent interactions between DnaJ, DnaK and GrpE are required for fully efficient folding. Also involved, together with DnaK and GrpE, in the DNA replication of plasmids through activation of initiation proteins.</text>
</comment>
<comment type="cofactor">
    <cofactor evidence="1">
        <name>Zn(2+)</name>
        <dbReference type="ChEBI" id="CHEBI:29105"/>
    </cofactor>
    <text evidence="1">Binds 2 Zn(2+) ions per monomer.</text>
</comment>
<comment type="subunit">
    <text evidence="1">Homodimer.</text>
</comment>
<comment type="subcellular location">
    <subcellularLocation>
        <location evidence="1">Cytoplasm</location>
    </subcellularLocation>
</comment>
<comment type="induction">
    <text>By heat shock as well as salt or ethanol stress.</text>
</comment>
<comment type="domain">
    <text evidence="1">The J domain is necessary and sufficient to stimulate DnaK ATPase activity. Zinc center 1 plays an important role in the autonomous, DnaK-independent chaperone activity of DnaJ. Zinc center 2 is essential for interaction with DnaK and for DnaJ activity.</text>
</comment>
<comment type="similarity">
    <text evidence="1">Belongs to the DnaJ family.</text>
</comment>
<accession>O87778</accession>
<gene>
    <name evidence="1" type="primary">dnaJ</name>
</gene>
<proteinExistence type="evidence at transcript level"/>
<protein>
    <recommendedName>
        <fullName evidence="1">Chaperone protein DnaJ</fullName>
    </recommendedName>
</protein>
<evidence type="ECO:0000255" key="1">
    <source>
        <dbReference type="HAMAP-Rule" id="MF_01152"/>
    </source>
</evidence>
<organism>
    <name type="scientific">Latilactobacillus sakei</name>
    <name type="common">Lactobacillus sakei</name>
    <dbReference type="NCBI Taxonomy" id="1599"/>
    <lineage>
        <taxon>Bacteria</taxon>
        <taxon>Bacillati</taxon>
        <taxon>Bacillota</taxon>
        <taxon>Bacilli</taxon>
        <taxon>Lactobacillales</taxon>
        <taxon>Lactobacillaceae</taxon>
        <taxon>Latilactobacillus</taxon>
    </lineage>
</organism>
<reference key="1">
    <citation type="journal article" date="1999" name="Syst. Appl. Microbiol.">
        <title>Molecular characterisation of the dnaK operon of Lactobacillus sakei LTH681.</title>
        <authorList>
            <person name="Schmidt G."/>
            <person name="Hertel C."/>
            <person name="Hammes W.P."/>
        </authorList>
    </citation>
    <scope>NUCLEOTIDE SEQUENCE [GENOMIC DNA]</scope>
    <source>
        <strain>LTH681</strain>
    </source>
</reference>